<sequence length="190" mass="21107">MITMFKIVRGDITKFRAEAIVNAANKYLEHGGGVAYAIAKAASGDVSEYTRISKEEMRRQLGKDWIEHGEVVVTPPMKLKENGVKYVIHTVGPYCGGVWSKDKEEKLKLAILGALKKADELGVKSIAFPAISAGIYGCPLKEVVRTFKEVVKEFLKVANHVKEVYLVLYSERDYKLALETIGLGDNDESR</sequence>
<proteinExistence type="predicted"/>
<gene>
    <name type="ordered locus">PH1513</name>
</gene>
<feature type="chain" id="PRO_0000089234" description="Uncharacterized protein PH1513">
    <location>
        <begin position="1"/>
        <end position="190"/>
    </location>
</feature>
<feature type="domain" description="Macro" evidence="1">
    <location>
        <begin position="1"/>
        <end position="185"/>
    </location>
</feature>
<name>Y1513_PYRHO</name>
<reference key="1">
    <citation type="journal article" date="1998" name="DNA Res.">
        <title>Complete sequence and gene organization of the genome of a hyper-thermophilic archaebacterium, Pyrococcus horikoshii OT3.</title>
        <authorList>
            <person name="Kawarabayasi Y."/>
            <person name="Sawada M."/>
            <person name="Horikawa H."/>
            <person name="Haikawa Y."/>
            <person name="Hino Y."/>
            <person name="Yamamoto S."/>
            <person name="Sekine M."/>
            <person name="Baba S."/>
            <person name="Kosugi H."/>
            <person name="Hosoyama A."/>
            <person name="Nagai Y."/>
            <person name="Sakai M."/>
            <person name="Ogura K."/>
            <person name="Otsuka R."/>
            <person name="Nakazawa H."/>
            <person name="Takamiya M."/>
            <person name="Ohfuku Y."/>
            <person name="Funahashi T."/>
            <person name="Tanaka T."/>
            <person name="Kudoh Y."/>
            <person name="Yamazaki J."/>
            <person name="Kushida N."/>
            <person name="Oguchi A."/>
            <person name="Aoki K."/>
            <person name="Yoshizawa T."/>
            <person name="Nakamura Y."/>
            <person name="Robb F.T."/>
            <person name="Horikoshi K."/>
            <person name="Masuchi Y."/>
            <person name="Shizuya H."/>
            <person name="Kikuchi H."/>
        </authorList>
    </citation>
    <scope>NUCLEOTIDE SEQUENCE [LARGE SCALE GENOMIC DNA]</scope>
    <source>
        <strain>ATCC 700860 / DSM 12428 / JCM 9974 / NBRC 100139 / OT-3</strain>
    </source>
</reference>
<accession>O59182</accession>
<dbReference type="EMBL" id="BA000001">
    <property type="protein sequence ID" value="BAA30621.1"/>
    <property type="molecule type" value="Genomic_DNA"/>
</dbReference>
<dbReference type="PIR" id="E71027">
    <property type="entry name" value="E71027"/>
</dbReference>
<dbReference type="SMR" id="O59182"/>
<dbReference type="STRING" id="70601.gene:9378495"/>
<dbReference type="EnsemblBacteria" id="BAA30621">
    <property type="protein sequence ID" value="BAA30621"/>
    <property type="gene ID" value="BAA30621"/>
</dbReference>
<dbReference type="KEGG" id="pho:PH1513"/>
<dbReference type="eggNOG" id="arCOG04225">
    <property type="taxonomic scope" value="Archaea"/>
</dbReference>
<dbReference type="Proteomes" id="UP000000752">
    <property type="component" value="Chromosome"/>
</dbReference>
<dbReference type="CDD" id="cd02907">
    <property type="entry name" value="Macro_Af1521_BAL-like"/>
    <property type="match status" value="1"/>
</dbReference>
<dbReference type="Gene3D" id="3.40.220.10">
    <property type="entry name" value="Leucine Aminopeptidase, subunit E, domain 1"/>
    <property type="match status" value="1"/>
</dbReference>
<dbReference type="InterPro" id="IPR002589">
    <property type="entry name" value="Macro_dom"/>
</dbReference>
<dbReference type="InterPro" id="IPR043472">
    <property type="entry name" value="Macro_dom-like"/>
</dbReference>
<dbReference type="NCBIfam" id="NF001662">
    <property type="entry name" value="PRK00431.1-3"/>
    <property type="match status" value="1"/>
</dbReference>
<dbReference type="PANTHER" id="PTHR11106">
    <property type="entry name" value="GANGLIOSIDE INDUCED DIFFERENTIATION ASSOCIATED PROTEIN 2-RELATED"/>
    <property type="match status" value="1"/>
</dbReference>
<dbReference type="PANTHER" id="PTHR11106:SF27">
    <property type="entry name" value="MACRO DOMAIN-CONTAINING PROTEIN"/>
    <property type="match status" value="1"/>
</dbReference>
<dbReference type="Pfam" id="PF01661">
    <property type="entry name" value="Macro"/>
    <property type="match status" value="1"/>
</dbReference>
<dbReference type="SMART" id="SM00506">
    <property type="entry name" value="A1pp"/>
    <property type="match status" value="1"/>
</dbReference>
<dbReference type="SUPFAM" id="SSF52949">
    <property type="entry name" value="Macro domain-like"/>
    <property type="match status" value="1"/>
</dbReference>
<dbReference type="PROSITE" id="PS51154">
    <property type="entry name" value="MACRO"/>
    <property type="match status" value="1"/>
</dbReference>
<protein>
    <recommendedName>
        <fullName>Uncharacterized protein PH1513</fullName>
    </recommendedName>
</protein>
<evidence type="ECO:0000255" key="1">
    <source>
        <dbReference type="PROSITE-ProRule" id="PRU00490"/>
    </source>
</evidence>
<organism>
    <name type="scientific">Pyrococcus horikoshii (strain ATCC 700860 / DSM 12428 / JCM 9974 / NBRC 100139 / OT-3)</name>
    <dbReference type="NCBI Taxonomy" id="70601"/>
    <lineage>
        <taxon>Archaea</taxon>
        <taxon>Methanobacteriati</taxon>
        <taxon>Methanobacteriota</taxon>
        <taxon>Thermococci</taxon>
        <taxon>Thermococcales</taxon>
        <taxon>Thermococcaceae</taxon>
        <taxon>Pyrococcus</taxon>
    </lineage>
</organism>